<proteinExistence type="evidence at protein level"/>
<evidence type="ECO:0000250" key="1">
    <source>
        <dbReference type="UniProtKB" id="P11411"/>
    </source>
</evidence>
<evidence type="ECO:0000250" key="2">
    <source>
        <dbReference type="UniProtKB" id="P11413"/>
    </source>
</evidence>
<evidence type="ECO:0000269" key="3">
    <source>
    </source>
</evidence>
<evidence type="ECO:0000269" key="4">
    <source>
    </source>
</evidence>
<evidence type="ECO:0000269" key="5">
    <source>
    </source>
</evidence>
<evidence type="ECO:0000269" key="6">
    <source>
    </source>
</evidence>
<evidence type="ECO:0000269" key="7">
    <source>
    </source>
</evidence>
<evidence type="ECO:0000305" key="8"/>
<evidence type="ECO:0007744" key="9">
    <source>
    </source>
</evidence>
<reference key="1">
    <citation type="journal article" date="1990" name="Gene">
        <title>Isolation and characterization of the ZWF1 gene of Saccharomyces cerevisiae, encoding glucose-6-phosphate dehydrogenase.</title>
        <authorList>
            <person name="Nogae I."/>
            <person name="Johnston M."/>
        </authorList>
    </citation>
    <scope>NUCLEOTIDE SEQUENCE [GENOMIC DNA]</scope>
</reference>
<reference key="2">
    <citation type="journal article" date="1991" name="EMBO J.">
        <title>Identification of the structural gene for glucose-6-phosphate dehydrogenase in yeast. Inactivation leads to a nutritional requirement for organic sulfur.</title>
        <authorList>
            <person name="Thomas D."/>
            <person name="Cherest H."/>
            <person name="Surdin-Kerjan Y."/>
        </authorList>
    </citation>
    <scope>NUCLEOTIDE SEQUENCE [GENOMIC DNA]</scope>
</reference>
<reference key="3">
    <citation type="journal article" date="1996" name="Yeast">
        <title>The DNA sequence of cosmid 14-5 from chromosome XIV reveals 21 open reading frames including a novel gene encoding a globin-like domain.</title>
        <authorList>
            <person name="Pandolfo D."/>
            <person name="de Antoni A."/>
            <person name="Lanfranchi G."/>
            <person name="Valle G."/>
        </authorList>
    </citation>
    <scope>NUCLEOTIDE SEQUENCE [GENOMIC DNA]</scope>
</reference>
<reference key="4">
    <citation type="journal article" date="1997" name="Nature">
        <title>The nucleotide sequence of Saccharomyces cerevisiae chromosome XIV and its evolutionary implications.</title>
        <authorList>
            <person name="Philippsen P."/>
            <person name="Kleine K."/>
            <person name="Poehlmann R."/>
            <person name="Duesterhoeft A."/>
            <person name="Hamberg K."/>
            <person name="Hegemann J.H."/>
            <person name="Obermaier B."/>
            <person name="Urrestarazu L.A."/>
            <person name="Aert R."/>
            <person name="Albermann K."/>
            <person name="Altmann R."/>
            <person name="Andre B."/>
            <person name="Baladron V."/>
            <person name="Ballesta J.P.G."/>
            <person name="Becam A.-M."/>
            <person name="Beinhauer J.D."/>
            <person name="Boskovic J."/>
            <person name="Buitrago M.J."/>
            <person name="Bussereau F."/>
            <person name="Coster F."/>
            <person name="Crouzet M."/>
            <person name="D'Angelo M."/>
            <person name="Dal Pero F."/>
            <person name="De Antoni A."/>
            <person name="del Rey F."/>
            <person name="Doignon F."/>
            <person name="Domdey H."/>
            <person name="Dubois E."/>
            <person name="Fiedler T.A."/>
            <person name="Fleig U."/>
            <person name="Floeth M."/>
            <person name="Fritz C."/>
            <person name="Gaillardin C."/>
            <person name="Garcia-Cantalejo J.M."/>
            <person name="Glansdorff N."/>
            <person name="Goffeau A."/>
            <person name="Gueldener U."/>
            <person name="Herbert C.J."/>
            <person name="Heumann K."/>
            <person name="Heuss-Neitzel D."/>
            <person name="Hilbert H."/>
            <person name="Hinni K."/>
            <person name="Iraqui Houssaini I."/>
            <person name="Jacquet M."/>
            <person name="Jimenez A."/>
            <person name="Jonniaux J.-L."/>
            <person name="Karpfinger-Hartl L."/>
            <person name="Lanfranchi G."/>
            <person name="Lepingle A."/>
            <person name="Levesque H."/>
            <person name="Lyck R."/>
            <person name="Maftahi M."/>
            <person name="Mallet L."/>
            <person name="Maurer C.T.C."/>
            <person name="Messenguy F."/>
            <person name="Mewes H.-W."/>
            <person name="Moestl D."/>
            <person name="Nasr F."/>
            <person name="Nicaud J.-M."/>
            <person name="Niedenthal R.K."/>
            <person name="Pandolfo D."/>
            <person name="Pierard A."/>
            <person name="Piravandi E."/>
            <person name="Planta R.J."/>
            <person name="Pohl T.M."/>
            <person name="Purnelle B."/>
            <person name="Rebischung C."/>
            <person name="Remacha M.A."/>
            <person name="Revuelta J.L."/>
            <person name="Rinke M."/>
            <person name="Saiz J.E."/>
            <person name="Sartorello F."/>
            <person name="Scherens B."/>
            <person name="Sen-Gupta M."/>
            <person name="Soler-Mira A."/>
            <person name="Urbanus J.H.M."/>
            <person name="Valle G."/>
            <person name="Van Dyck L."/>
            <person name="Verhasselt P."/>
            <person name="Vierendeels F."/>
            <person name="Vissers S."/>
            <person name="Voet M."/>
            <person name="Volckaert G."/>
            <person name="Wach A."/>
            <person name="Wambutt R."/>
            <person name="Wedler H."/>
            <person name="Zollner A."/>
            <person name="Hani J."/>
        </authorList>
    </citation>
    <scope>NUCLEOTIDE SEQUENCE [LARGE SCALE GENOMIC DNA]</scope>
    <source>
        <strain>ATCC 204508 / S288c</strain>
    </source>
</reference>
<reference key="5">
    <citation type="journal article" date="2014" name="G3 (Bethesda)">
        <title>The reference genome sequence of Saccharomyces cerevisiae: Then and now.</title>
        <authorList>
            <person name="Engel S.R."/>
            <person name="Dietrich F.S."/>
            <person name="Fisk D.G."/>
            <person name="Binkley G."/>
            <person name="Balakrishnan R."/>
            <person name="Costanzo M.C."/>
            <person name="Dwight S.S."/>
            <person name="Hitz B.C."/>
            <person name="Karra K."/>
            <person name="Nash R.S."/>
            <person name="Weng S."/>
            <person name="Wong E.D."/>
            <person name="Lloyd P."/>
            <person name="Skrzypek M.S."/>
            <person name="Miyasato S.R."/>
            <person name="Simison M."/>
            <person name="Cherry J.M."/>
        </authorList>
    </citation>
    <scope>GENOME REANNOTATION</scope>
    <source>
        <strain>ATCC 204508 / S288c</strain>
    </source>
</reference>
<reference key="6">
    <citation type="journal article" date="2007" name="Genome Res.">
        <title>Approaching a complete repository of sequence-verified protein-encoding clones for Saccharomyces cerevisiae.</title>
        <authorList>
            <person name="Hu Y."/>
            <person name="Rolfs A."/>
            <person name="Bhullar B."/>
            <person name="Murthy T.V.S."/>
            <person name="Zhu C."/>
            <person name="Berger M.F."/>
            <person name="Camargo A.A."/>
            <person name="Kelley F."/>
            <person name="McCarron S."/>
            <person name="Jepson D."/>
            <person name="Richardson A."/>
            <person name="Raphael J."/>
            <person name="Moreira D."/>
            <person name="Taycher E."/>
            <person name="Zuo D."/>
            <person name="Mohr S."/>
            <person name="Kane M.F."/>
            <person name="Williamson J."/>
            <person name="Simpson A.J.G."/>
            <person name="Bulyk M.L."/>
            <person name="Harlow E."/>
            <person name="Marsischky G."/>
            <person name="Kolodner R.D."/>
            <person name="LaBaer J."/>
        </authorList>
    </citation>
    <scope>NUCLEOTIDE SEQUENCE [GENOMIC DNA]</scope>
    <source>
        <strain>ATCC 204508 / S288c</strain>
    </source>
</reference>
<reference key="7">
    <citation type="journal article" date="1991" name="Eur. J. Biochem.">
        <title>Functionally important regions of glucose-6-phosphate dehydrogenase defined by the Saccharomyces cerevisiae enzyme and its differences from the mammalian and insect forms.</title>
        <authorList>
            <person name="Persson B."/>
            <person name="Joernvall H."/>
            <person name="Wood I."/>
            <person name="Jeffery J."/>
        </authorList>
    </citation>
    <scope>PROTEIN SEQUENCE OF 2-505</scope>
    <scope>CLEAVAGE OF INITIATOR METHIONINE</scope>
    <scope>ACETYLATION AT SER-2</scope>
</reference>
<reference key="8">
    <citation type="journal article" date="1985" name="Biochemistry">
        <title>Glucose-6-phosphate dehydrogenase from Saccharomyces cerevisiae: characterization of a reactive lysine residue labeled with acetylsalicylic acid.</title>
        <authorList>
            <person name="Jeffery J."/>
            <person name="Hobbs L."/>
            <person name="Joernvall H."/>
        </authorList>
    </citation>
    <scope>PROTEIN SEQUENCE OF 185-195</scope>
</reference>
<reference key="9">
    <citation type="journal article" date="1990" name="FEBS Lett.">
        <title>Fast atom bombardment mass spectrometry and chemical analysis in determinations of acyl-blocked protein structures.</title>
        <authorList>
            <person name="Egestad B."/>
            <person name="Estonius M."/>
            <person name="Danielsson O."/>
            <person name="Persson B."/>
            <person name="Cederlund E."/>
            <person name="Kaiser R."/>
            <person name="Holmquist B."/>
            <person name="Vallee B."/>
            <person name="Pares X."/>
            <person name="Jefferey J."/>
            <person name="Joernvall H."/>
        </authorList>
    </citation>
    <scope>PROTEIN SEQUENCE OF 2-7</scope>
    <scope>CLEAVAGE OF INITIATOR METHIONINE</scope>
    <scope>ACETYLATION AT SER-2</scope>
</reference>
<reference key="10">
    <citation type="journal article" date="2003" name="Nature">
        <title>Global analysis of protein expression in yeast.</title>
        <authorList>
            <person name="Ghaemmaghami S."/>
            <person name="Huh W.-K."/>
            <person name="Bower K."/>
            <person name="Howson R.W."/>
            <person name="Belle A."/>
            <person name="Dephoure N."/>
            <person name="O'Shea E.K."/>
            <person name="Weissman J.S."/>
        </authorList>
    </citation>
    <scope>LEVEL OF PROTEIN EXPRESSION [LARGE SCALE ANALYSIS]</scope>
</reference>
<reference key="11">
    <citation type="journal article" date="2007" name="J. Proteome Res.">
        <title>Large-scale phosphorylation analysis of alpha-factor-arrested Saccharomyces cerevisiae.</title>
        <authorList>
            <person name="Li X."/>
            <person name="Gerber S.A."/>
            <person name="Rudner A.D."/>
            <person name="Beausoleil S.A."/>
            <person name="Haas W."/>
            <person name="Villen J."/>
            <person name="Elias J.E."/>
            <person name="Gygi S.P."/>
        </authorList>
    </citation>
    <scope>PHOSPHORYLATION [LARGE SCALE ANALYSIS] AT SER-142 AND TYR-145</scope>
    <scope>IDENTIFICATION BY MASS SPECTROMETRY [LARGE SCALE ANALYSIS]</scope>
    <source>
        <strain>ADR376</strain>
    </source>
</reference>
<reference key="12">
    <citation type="journal article" date="2010" name="J. Biol. Chem.">
        <title>Identification and functional characterization of a novel mitochondrial carrier for citrate and oxoglutarate in Saccharomyces cerevisiae.</title>
        <authorList>
            <person name="Castegna A."/>
            <person name="Scarcia P."/>
            <person name="Agrimi G."/>
            <person name="Palmieri L."/>
            <person name="Rottensteiner H."/>
            <person name="Spera I."/>
            <person name="Germinario L."/>
            <person name="Palmieri F."/>
        </authorList>
    </citation>
    <scope>DISRUPTION PHENOTYPE</scope>
</reference>
<reference key="13">
    <citation type="journal article" date="2018" name="ACS Chem. Biol.">
        <title>Discovery and Functional Characterization of a Yeast Sugar Alcohol Phosphatase.</title>
        <authorList>
            <person name="Xu Y.F."/>
            <person name="Lu W."/>
            <person name="Chen J.C."/>
            <person name="Johnson S.A."/>
            <person name="Gibney P.A."/>
            <person name="Thomas D.G."/>
            <person name="Brown G."/>
            <person name="May A.L."/>
            <person name="Campagna S.R."/>
            <person name="Yakunin A.F."/>
            <person name="Botstein D."/>
            <person name="Rabinowitz J.D."/>
        </authorList>
    </citation>
    <scope>DISRUPTION PHENOTYPE</scope>
</reference>
<keyword id="KW-0007">Acetylation</keyword>
<keyword id="KW-0119">Carbohydrate metabolism</keyword>
<keyword id="KW-0903">Direct protein sequencing</keyword>
<keyword id="KW-0313">Glucose metabolism</keyword>
<keyword id="KW-0521">NADP</keyword>
<keyword id="KW-0560">Oxidoreductase</keyword>
<keyword id="KW-0597">Phosphoprotein</keyword>
<keyword id="KW-1185">Reference proteome</keyword>
<organism>
    <name type="scientific">Saccharomyces cerevisiae (strain ATCC 204508 / S288c)</name>
    <name type="common">Baker's yeast</name>
    <dbReference type="NCBI Taxonomy" id="559292"/>
    <lineage>
        <taxon>Eukaryota</taxon>
        <taxon>Fungi</taxon>
        <taxon>Dikarya</taxon>
        <taxon>Ascomycota</taxon>
        <taxon>Saccharomycotina</taxon>
        <taxon>Saccharomycetes</taxon>
        <taxon>Saccharomycetales</taxon>
        <taxon>Saccharomycetaceae</taxon>
        <taxon>Saccharomyces</taxon>
    </lineage>
</organism>
<comment type="function">
    <text evidence="2">Catalyzes the rate-limiting step of the oxidative pentose-phosphate pathway, which represents a route for the dissimilation of carbohydrates besides glycolysis. The main function of this enzyme is to provide reducing power (NADPH) and pentose phosphates for fatty acid and nucleic acid synthesis (By similarity).</text>
</comment>
<comment type="catalytic activity">
    <reaction evidence="2">
        <text>D-glucose 6-phosphate + NADP(+) = 6-phospho-D-glucono-1,5-lactone + NADPH + H(+)</text>
        <dbReference type="Rhea" id="RHEA:15841"/>
        <dbReference type="ChEBI" id="CHEBI:15378"/>
        <dbReference type="ChEBI" id="CHEBI:57783"/>
        <dbReference type="ChEBI" id="CHEBI:57955"/>
        <dbReference type="ChEBI" id="CHEBI:58349"/>
        <dbReference type="ChEBI" id="CHEBI:61548"/>
        <dbReference type="EC" id="1.1.1.49"/>
    </reaction>
</comment>
<comment type="pathway">
    <text evidence="2">Carbohydrate degradation; pentose phosphate pathway; D-ribulose 5-phosphate from D-glucose 6-phosphate (oxidative stage): step 1/3.</text>
</comment>
<comment type="disruption phenotype">
    <text evidence="4 7">Shows growth defects in acetate-supplemented medium; the phenotype is enhanced by addition of hydrogen peroxide (increased oxidative stress) and/or double knockout of ZWF1 and YHM2 (PubMed:20371607). Decreases the cytosolic NADPH/NADP(+) ratio; this effect is enhanced in the presence of hydrogen peroxide (PubMed:20371607). Ribitol-5P absent from cell (PubMed:30240188). Decreases cellular levels of ribose-5P and ribulose-5P (PubMed:30240188). Decreases cytosolic levels of citrate and oxoglutarate in the presence of hydrogen peroxide (PubMed:20371607). Double knockouts of ZWF1 and YHM2 show an increased mitochondrial NADPH/NADP(+) ratio in the presence of hydrogen peroxide (PubMed:20371607). Reactive oxygen species (ROS) levels are moderately increased following hydrogen peroxide treatment; in double knockouts of YHM2 and ZWF1 there is a larger increase (PubMed:20371607).</text>
</comment>
<comment type="miscellaneous">
    <text evidence="3">Present with 15000 molecules/cell in log phase SD medium.</text>
</comment>
<comment type="similarity">
    <text evidence="8">Belongs to the glucose-6-phosphate dehydrogenase family.</text>
</comment>
<dbReference type="EC" id="1.1.1.49" evidence="2"/>
<dbReference type="EMBL" id="M34709">
    <property type="protein sequence ID" value="AAA34619.1"/>
    <property type="molecule type" value="Genomic_DNA"/>
</dbReference>
<dbReference type="EMBL" id="X57336">
    <property type="protein sequence ID" value="CAA40611.1"/>
    <property type="molecule type" value="Genomic_DNA"/>
</dbReference>
<dbReference type="EMBL" id="Z69381">
    <property type="protein sequence ID" value="CAA93357.1"/>
    <property type="molecule type" value="Genomic_DNA"/>
</dbReference>
<dbReference type="EMBL" id="Z71517">
    <property type="protein sequence ID" value="CAA96146.1"/>
    <property type="molecule type" value="Genomic_DNA"/>
</dbReference>
<dbReference type="EMBL" id="AY692998">
    <property type="protein sequence ID" value="AAT93017.1"/>
    <property type="molecule type" value="Genomic_DNA"/>
</dbReference>
<dbReference type="EMBL" id="BK006947">
    <property type="protein sequence ID" value="DAA10318.1"/>
    <property type="molecule type" value="Genomic_DNA"/>
</dbReference>
<dbReference type="PIR" id="S13744">
    <property type="entry name" value="S13744"/>
</dbReference>
<dbReference type="RefSeq" id="NP_014158.1">
    <property type="nucleotide sequence ID" value="NM_001183079.1"/>
</dbReference>
<dbReference type="SMR" id="P11412"/>
<dbReference type="BioGRID" id="35598">
    <property type="interactions" value="257"/>
</dbReference>
<dbReference type="DIP" id="DIP-5061N"/>
<dbReference type="FunCoup" id="P11412">
    <property type="interactions" value="691"/>
</dbReference>
<dbReference type="IntAct" id="P11412">
    <property type="interactions" value="8"/>
</dbReference>
<dbReference type="MINT" id="P11412"/>
<dbReference type="STRING" id="4932.YNL241C"/>
<dbReference type="BindingDB" id="P11412"/>
<dbReference type="ChEMBL" id="CHEMBL1075249"/>
<dbReference type="GlyGen" id="P11412">
    <property type="glycosylation" value="1 site"/>
</dbReference>
<dbReference type="iPTMnet" id="P11412"/>
<dbReference type="PaxDb" id="4932-YNL241C"/>
<dbReference type="PeptideAtlas" id="P11412"/>
<dbReference type="EnsemblFungi" id="YNL241C_mRNA">
    <property type="protein sequence ID" value="YNL241C"/>
    <property type="gene ID" value="YNL241C"/>
</dbReference>
<dbReference type="GeneID" id="855480"/>
<dbReference type="KEGG" id="sce:YNL241C"/>
<dbReference type="AGR" id="SGD:S000005185"/>
<dbReference type="SGD" id="S000005185">
    <property type="gene designation" value="ZWF1"/>
</dbReference>
<dbReference type="VEuPathDB" id="FungiDB:YNL241C"/>
<dbReference type="eggNOG" id="KOG0563">
    <property type="taxonomic scope" value="Eukaryota"/>
</dbReference>
<dbReference type="GeneTree" id="ENSGT00530000063435"/>
<dbReference type="HOGENOM" id="CLU_013524_2_3_1"/>
<dbReference type="InParanoid" id="P11412"/>
<dbReference type="OMA" id="ERAGYYE"/>
<dbReference type="OrthoDB" id="60984at2759"/>
<dbReference type="BioCyc" id="MetaCyc:YNL241C-MONOMER"/>
<dbReference type="BioCyc" id="YEAST:YNL241C-MONOMER"/>
<dbReference type="BRENDA" id="1.1.1.49">
    <property type="organism ID" value="984"/>
</dbReference>
<dbReference type="Reactome" id="R-SCE-5628897">
    <property type="pathway name" value="TP53 Regulates Metabolic Genes"/>
</dbReference>
<dbReference type="Reactome" id="R-SCE-71336">
    <property type="pathway name" value="Pentose phosphate pathway"/>
</dbReference>
<dbReference type="SABIO-RK" id="P11412"/>
<dbReference type="UniPathway" id="UPA00115">
    <property type="reaction ID" value="UER00408"/>
</dbReference>
<dbReference type="BioGRID-ORCS" id="855480">
    <property type="hits" value="4 hits in 10 CRISPR screens"/>
</dbReference>
<dbReference type="PRO" id="PR:P11412"/>
<dbReference type="Proteomes" id="UP000002311">
    <property type="component" value="Chromosome XIV"/>
</dbReference>
<dbReference type="RNAct" id="P11412">
    <property type="molecule type" value="protein"/>
</dbReference>
<dbReference type="GO" id="GO:0005737">
    <property type="term" value="C:cytoplasm"/>
    <property type="evidence" value="ECO:0007005"/>
    <property type="project" value="SGD"/>
</dbReference>
<dbReference type="GO" id="GO:0005829">
    <property type="term" value="C:cytosol"/>
    <property type="evidence" value="ECO:0000318"/>
    <property type="project" value="GO_Central"/>
</dbReference>
<dbReference type="GO" id="GO:0004345">
    <property type="term" value="F:glucose-6-phosphate dehydrogenase activity"/>
    <property type="evidence" value="ECO:0000315"/>
    <property type="project" value="SGD"/>
</dbReference>
<dbReference type="GO" id="GO:0050661">
    <property type="term" value="F:NADP binding"/>
    <property type="evidence" value="ECO:0007669"/>
    <property type="project" value="InterPro"/>
</dbReference>
<dbReference type="GO" id="GO:0006006">
    <property type="term" value="P:glucose metabolic process"/>
    <property type="evidence" value="ECO:0000318"/>
    <property type="project" value="GO_Central"/>
</dbReference>
<dbReference type="GO" id="GO:0006740">
    <property type="term" value="P:NADPH regeneration"/>
    <property type="evidence" value="ECO:0000315"/>
    <property type="project" value="SGD"/>
</dbReference>
<dbReference type="GO" id="GO:0009051">
    <property type="term" value="P:pentose-phosphate shunt, oxidative branch"/>
    <property type="evidence" value="ECO:0000315"/>
    <property type="project" value="SGD"/>
</dbReference>
<dbReference type="GO" id="GO:0042542">
    <property type="term" value="P:response to hydrogen peroxide"/>
    <property type="evidence" value="ECO:0000315"/>
    <property type="project" value="SGD"/>
</dbReference>
<dbReference type="FunFam" id="3.30.360.10:FF:000015">
    <property type="entry name" value="Glucose-6-phosphate 1-dehydrogenase"/>
    <property type="match status" value="1"/>
</dbReference>
<dbReference type="FunFam" id="3.40.50.720:FF:000111">
    <property type="entry name" value="Glucose-6-phosphate 1-dehydrogenase"/>
    <property type="match status" value="1"/>
</dbReference>
<dbReference type="Gene3D" id="3.30.360.10">
    <property type="entry name" value="Dihydrodipicolinate Reductase, domain 2"/>
    <property type="match status" value="1"/>
</dbReference>
<dbReference type="Gene3D" id="3.40.50.720">
    <property type="entry name" value="NAD(P)-binding Rossmann-like Domain"/>
    <property type="match status" value="1"/>
</dbReference>
<dbReference type="HAMAP" id="MF_00966">
    <property type="entry name" value="G6PD"/>
    <property type="match status" value="1"/>
</dbReference>
<dbReference type="InterPro" id="IPR001282">
    <property type="entry name" value="G6P_DH"/>
</dbReference>
<dbReference type="InterPro" id="IPR019796">
    <property type="entry name" value="G6P_DH_AS"/>
</dbReference>
<dbReference type="InterPro" id="IPR022675">
    <property type="entry name" value="G6P_DH_C"/>
</dbReference>
<dbReference type="InterPro" id="IPR022674">
    <property type="entry name" value="G6P_DH_NAD-bd"/>
</dbReference>
<dbReference type="InterPro" id="IPR036291">
    <property type="entry name" value="NAD(P)-bd_dom_sf"/>
</dbReference>
<dbReference type="NCBIfam" id="TIGR00871">
    <property type="entry name" value="zwf"/>
    <property type="match status" value="1"/>
</dbReference>
<dbReference type="PANTHER" id="PTHR23429:SF0">
    <property type="entry name" value="GLUCOSE-6-PHOSPHATE 1-DEHYDROGENASE"/>
    <property type="match status" value="1"/>
</dbReference>
<dbReference type="PANTHER" id="PTHR23429">
    <property type="entry name" value="GLUCOSE-6-PHOSPHATE 1-DEHYDROGENASE G6PD"/>
    <property type="match status" value="1"/>
</dbReference>
<dbReference type="Pfam" id="PF02781">
    <property type="entry name" value="G6PD_C"/>
    <property type="match status" value="1"/>
</dbReference>
<dbReference type="Pfam" id="PF00479">
    <property type="entry name" value="G6PD_N"/>
    <property type="match status" value="1"/>
</dbReference>
<dbReference type="PIRSF" id="PIRSF000110">
    <property type="entry name" value="G6PD"/>
    <property type="match status" value="1"/>
</dbReference>
<dbReference type="PRINTS" id="PR00079">
    <property type="entry name" value="G6PDHDRGNASE"/>
</dbReference>
<dbReference type="SUPFAM" id="SSF55347">
    <property type="entry name" value="Glyceraldehyde-3-phosphate dehydrogenase-like, C-terminal domain"/>
    <property type="match status" value="1"/>
</dbReference>
<dbReference type="SUPFAM" id="SSF51735">
    <property type="entry name" value="NAD(P)-binding Rossmann-fold domains"/>
    <property type="match status" value="1"/>
</dbReference>
<dbReference type="PROSITE" id="PS00069">
    <property type="entry name" value="G6P_DEHYDROGENASE"/>
    <property type="match status" value="1"/>
</dbReference>
<accession>P11412</accession>
<accession>D6W0V2</accession>
<accession>E9P908</accession>
<gene>
    <name type="primary">ZWF1</name>
    <name type="synonym">MET19</name>
    <name type="ordered locus">YNL241C</name>
    <name type="ORF">N1110</name>
</gene>
<name>G6PD_YEAST</name>
<feature type="initiator methionine" description="Removed" evidence="5 6">
    <location>
        <position position="1"/>
    </location>
</feature>
<feature type="chain" id="PRO_0000068107" description="Glucose-6-phosphate 1-dehydrogenase">
    <location>
        <begin position="2"/>
        <end position="505"/>
    </location>
</feature>
<feature type="active site" description="Proton acceptor" evidence="1">
    <location>
        <position position="249"/>
    </location>
</feature>
<feature type="binding site" evidence="2">
    <location>
        <begin position="18"/>
        <end position="25"/>
    </location>
    <ligand>
        <name>NADP(+)</name>
        <dbReference type="ChEBI" id="CHEBI:58349"/>
        <label>1</label>
    </ligand>
</feature>
<feature type="binding site" evidence="2">
    <location>
        <position position="52"/>
    </location>
    <ligand>
        <name>NADP(+)</name>
        <dbReference type="ChEBI" id="CHEBI:58349"/>
        <label>1</label>
    </ligand>
</feature>
<feature type="binding site" evidence="2">
    <location>
        <position position="157"/>
    </location>
    <ligand>
        <name>D-glucose 6-phosphate</name>
        <dbReference type="ChEBI" id="CHEBI:61548"/>
    </ligand>
</feature>
<feature type="binding site" evidence="2">
    <location>
        <position position="157"/>
    </location>
    <ligand>
        <name>NADP(+)</name>
        <dbReference type="ChEBI" id="CHEBI:58349"/>
        <label>1</label>
    </ligand>
</feature>
<feature type="binding site" evidence="2">
    <location>
        <begin position="187"/>
        <end position="191"/>
    </location>
    <ligand>
        <name>D-glucose 6-phosphate</name>
        <dbReference type="ChEBI" id="CHEBI:61548"/>
    </ligand>
</feature>
<feature type="binding site" evidence="2">
    <location>
        <position position="225"/>
    </location>
    <ligand>
        <name>D-glucose 6-phosphate</name>
        <dbReference type="ChEBI" id="CHEBI:61548"/>
    </ligand>
</feature>
<feature type="binding site" evidence="2">
    <location>
        <position position="244"/>
    </location>
    <ligand>
        <name>D-glucose 6-phosphate</name>
        <dbReference type="ChEBI" id="CHEBI:61548"/>
    </ligand>
</feature>
<feature type="binding site" evidence="2">
    <location>
        <position position="340"/>
    </location>
    <ligand>
        <name>NADP(+)</name>
        <dbReference type="ChEBI" id="CHEBI:58349"/>
        <label>2</label>
    </ligand>
</feature>
<feature type="binding site" evidence="2">
    <location>
        <position position="343"/>
    </location>
    <ligand>
        <name>D-glucose 6-phosphate</name>
        <dbReference type="ChEBI" id="CHEBI:61548"/>
    </ligand>
</feature>
<feature type="binding site" evidence="2">
    <location>
        <position position="349"/>
    </location>
    <ligand>
        <name>NADP(+)</name>
        <dbReference type="ChEBI" id="CHEBI:58349"/>
        <label>2</label>
    </ligand>
</feature>
<feature type="binding site" evidence="2">
    <location>
        <position position="353"/>
    </location>
    <ligand>
        <name>NADP(+)</name>
        <dbReference type="ChEBI" id="CHEBI:58349"/>
        <label>2</label>
    </ligand>
</feature>
<feature type="binding site" evidence="2">
    <location>
        <position position="375"/>
    </location>
    <ligand>
        <name>NADP(+)</name>
        <dbReference type="ChEBI" id="CHEBI:58349"/>
        <label>2</label>
    </ligand>
</feature>
<feature type="binding site" evidence="2">
    <location>
        <position position="377"/>
    </location>
    <ligand>
        <name>D-glucose 6-phosphate</name>
        <dbReference type="ChEBI" id="CHEBI:61548"/>
    </ligand>
</feature>
<feature type="binding site" evidence="2">
    <location>
        <begin position="383"/>
        <end position="385"/>
    </location>
    <ligand>
        <name>NADP(+)</name>
        <dbReference type="ChEBI" id="CHEBI:58349"/>
        <label>2</label>
    </ligand>
</feature>
<feature type="binding site" evidence="2">
    <location>
        <position position="470"/>
    </location>
    <ligand>
        <name>NADP(+)</name>
        <dbReference type="ChEBI" id="CHEBI:58349"/>
        <label>2</label>
    </ligand>
</feature>
<feature type="modified residue" description="N-acetylserine" evidence="5 6">
    <location>
        <position position="2"/>
    </location>
</feature>
<feature type="modified residue" description="Phosphoserine" evidence="9">
    <location>
        <position position="142"/>
    </location>
</feature>
<feature type="modified residue" description="Phosphotyrosine" evidence="9">
    <location>
        <position position="145"/>
    </location>
</feature>
<feature type="sequence conflict" description="In Ref. 7; AA sequence." evidence="8" ref="7">
    <location>
        <position position="59"/>
    </location>
</feature>
<feature type="sequence conflict" description="In Ref. 6; AAT93017." evidence="8" ref="6">
    <original>K</original>
    <variation>N</variation>
    <location>
        <position position="80"/>
    </location>
</feature>
<feature type="sequence conflict" description="In Ref. 1; AAA34619." evidence="8" ref="1">
    <original>P</original>
    <variation>A</variation>
    <location>
        <position position="175"/>
    </location>
</feature>
<sequence>MSEGPVKFEKNTVISVFGASGDLAKKKTFPALFGLFREGYLDPSTKIFGYARSKLSMEEDLKSRVLPHLKKPHGEADDSKVEQFFKMVSYISGNYDTDEGFDELRTQIEKFEKSANVDVPHRLFYLALPPSVFLTVAKQIKSRVYAENGITRVIVEKPFGHDLASARELQKNLGPLFKEEELYRIDHYLGKELVKNLLVLRFGNQFLNASWNRDNIQSVQISFKERFGTEGRGGYFDSIGIIRDVMQNHLLQIMTLLTMERPVSFDPESIRDEKVKVLKAVAPIDTDDVLLGQYGKSEDGSKPAYVDDDTVDKDSKCVTFAAMTFNIENERWEGVPIMMRAGKALNESKVEIRLQYKAVASGVFKDIPNNELVIRVQPDAAVYLKFNAKTPGLSNATQVTDLNLTYASRYQDFWIPEAYEVLIRDALLGDHSNFVRDDELDISWGIFTPLLKHIERPDGPTPEIYPYGSRGPKGLKEYMQKHKYVMPEKHPYAWPVTKPEDTKDN</sequence>
<protein>
    <recommendedName>
        <fullName>Glucose-6-phosphate 1-dehydrogenase</fullName>
        <shortName>G6PD</shortName>
        <ecNumber evidence="2">1.1.1.49</ecNumber>
    </recommendedName>
</protein>